<protein>
    <recommendedName>
        <fullName evidence="1">Adenylate kinase</fullName>
        <shortName evidence="1">AK</shortName>
        <ecNumber evidence="1">2.7.4.3</ecNumber>
    </recommendedName>
    <alternativeName>
        <fullName evidence="1">ATP-AMP transphosphorylase</fullName>
    </alternativeName>
    <alternativeName>
        <fullName evidence="1">ATP:AMP phosphotransferase</fullName>
    </alternativeName>
    <alternativeName>
        <fullName evidence="1">Adenylate monophosphate kinase</fullName>
    </alternativeName>
</protein>
<name>KAD_BACAC</name>
<gene>
    <name evidence="1" type="primary">adk</name>
    <name type="ordered locus">BAMEG_0147</name>
</gene>
<reference key="1">
    <citation type="submission" date="2008-10" db="EMBL/GenBank/DDBJ databases">
        <title>Genome sequence of Bacillus anthracis str. CDC 684.</title>
        <authorList>
            <person name="Dodson R.J."/>
            <person name="Munk A.C."/>
            <person name="Brettin T."/>
            <person name="Bruce D."/>
            <person name="Detter C."/>
            <person name="Tapia R."/>
            <person name="Han C."/>
            <person name="Sutton G."/>
            <person name="Sims D."/>
        </authorList>
    </citation>
    <scope>NUCLEOTIDE SEQUENCE [LARGE SCALE GENOMIC DNA]</scope>
    <source>
        <strain>CDC 684 / NRRL 3495</strain>
    </source>
</reference>
<evidence type="ECO:0000255" key="1">
    <source>
        <dbReference type="HAMAP-Rule" id="MF_00235"/>
    </source>
</evidence>
<organism>
    <name type="scientific">Bacillus anthracis (strain CDC 684 / NRRL 3495)</name>
    <dbReference type="NCBI Taxonomy" id="568206"/>
    <lineage>
        <taxon>Bacteria</taxon>
        <taxon>Bacillati</taxon>
        <taxon>Bacillota</taxon>
        <taxon>Bacilli</taxon>
        <taxon>Bacillales</taxon>
        <taxon>Bacillaceae</taxon>
        <taxon>Bacillus</taxon>
        <taxon>Bacillus cereus group</taxon>
    </lineage>
</organism>
<accession>C3LJA3</accession>
<comment type="function">
    <text evidence="1">Catalyzes the reversible transfer of the terminal phosphate group between ATP and AMP. Plays an important role in cellular energy homeostasis and in adenine nucleotide metabolism.</text>
</comment>
<comment type="catalytic activity">
    <reaction evidence="1">
        <text>AMP + ATP = 2 ADP</text>
        <dbReference type="Rhea" id="RHEA:12973"/>
        <dbReference type="ChEBI" id="CHEBI:30616"/>
        <dbReference type="ChEBI" id="CHEBI:456215"/>
        <dbReference type="ChEBI" id="CHEBI:456216"/>
        <dbReference type="EC" id="2.7.4.3"/>
    </reaction>
</comment>
<comment type="pathway">
    <text evidence="1">Purine metabolism; AMP biosynthesis via salvage pathway; AMP from ADP: step 1/1.</text>
</comment>
<comment type="subunit">
    <text evidence="1">Monomer.</text>
</comment>
<comment type="subcellular location">
    <subcellularLocation>
        <location evidence="1">Cytoplasm</location>
    </subcellularLocation>
</comment>
<comment type="domain">
    <text evidence="1">Consists of three domains, a large central CORE domain and two small peripheral domains, NMPbind and LID, which undergo movements during catalysis. The LID domain closes over the site of phosphoryl transfer upon ATP binding. Assembling and dissambling the active center during each catalytic cycle provides an effective means to prevent ATP hydrolysis. Some bacteria have evolved a zinc-coordinating structure that stabilizes the LID domain.</text>
</comment>
<comment type="similarity">
    <text evidence="1">Belongs to the adenylate kinase family.</text>
</comment>
<keyword id="KW-0067">ATP-binding</keyword>
<keyword id="KW-0963">Cytoplasm</keyword>
<keyword id="KW-0418">Kinase</keyword>
<keyword id="KW-0479">Metal-binding</keyword>
<keyword id="KW-0545">Nucleotide biosynthesis</keyword>
<keyword id="KW-0547">Nucleotide-binding</keyword>
<keyword id="KW-0808">Transferase</keyword>
<keyword id="KW-0862">Zinc</keyword>
<feature type="chain" id="PRO_1000191121" description="Adenylate kinase">
    <location>
        <begin position="1"/>
        <end position="216"/>
    </location>
</feature>
<feature type="region of interest" description="NMP" evidence="1">
    <location>
        <begin position="30"/>
        <end position="59"/>
    </location>
</feature>
<feature type="region of interest" description="LID" evidence="1">
    <location>
        <begin position="126"/>
        <end position="163"/>
    </location>
</feature>
<feature type="binding site" evidence="1">
    <location>
        <begin position="10"/>
        <end position="15"/>
    </location>
    <ligand>
        <name>ATP</name>
        <dbReference type="ChEBI" id="CHEBI:30616"/>
    </ligand>
</feature>
<feature type="binding site" evidence="1">
    <location>
        <position position="31"/>
    </location>
    <ligand>
        <name>AMP</name>
        <dbReference type="ChEBI" id="CHEBI:456215"/>
    </ligand>
</feature>
<feature type="binding site" evidence="1">
    <location>
        <position position="36"/>
    </location>
    <ligand>
        <name>AMP</name>
        <dbReference type="ChEBI" id="CHEBI:456215"/>
    </ligand>
</feature>
<feature type="binding site" evidence="1">
    <location>
        <begin position="57"/>
        <end position="59"/>
    </location>
    <ligand>
        <name>AMP</name>
        <dbReference type="ChEBI" id="CHEBI:456215"/>
    </ligand>
</feature>
<feature type="binding site" evidence="1">
    <location>
        <begin position="85"/>
        <end position="88"/>
    </location>
    <ligand>
        <name>AMP</name>
        <dbReference type="ChEBI" id="CHEBI:456215"/>
    </ligand>
</feature>
<feature type="binding site" evidence="1">
    <location>
        <position position="92"/>
    </location>
    <ligand>
        <name>AMP</name>
        <dbReference type="ChEBI" id="CHEBI:456215"/>
    </ligand>
</feature>
<feature type="binding site" evidence="1">
    <location>
        <position position="127"/>
    </location>
    <ligand>
        <name>ATP</name>
        <dbReference type="ChEBI" id="CHEBI:30616"/>
    </ligand>
</feature>
<feature type="binding site" evidence="1">
    <location>
        <position position="130"/>
    </location>
    <ligand>
        <name>Zn(2+)</name>
        <dbReference type="ChEBI" id="CHEBI:29105"/>
        <note>structural</note>
    </ligand>
</feature>
<feature type="binding site" evidence="1">
    <location>
        <position position="133"/>
    </location>
    <ligand>
        <name>Zn(2+)</name>
        <dbReference type="ChEBI" id="CHEBI:29105"/>
        <note>structural</note>
    </ligand>
</feature>
<feature type="binding site" evidence="1">
    <location>
        <begin position="136"/>
        <end position="137"/>
    </location>
    <ligand>
        <name>ATP</name>
        <dbReference type="ChEBI" id="CHEBI:30616"/>
    </ligand>
</feature>
<feature type="binding site" evidence="1">
    <location>
        <position position="150"/>
    </location>
    <ligand>
        <name>Zn(2+)</name>
        <dbReference type="ChEBI" id="CHEBI:29105"/>
        <note>structural</note>
    </ligand>
</feature>
<feature type="binding site" evidence="1">
    <location>
        <position position="153"/>
    </location>
    <ligand>
        <name>Zn(2+)</name>
        <dbReference type="ChEBI" id="CHEBI:29105"/>
        <note>structural</note>
    </ligand>
</feature>
<feature type="binding site" evidence="1">
    <location>
        <position position="160"/>
    </location>
    <ligand>
        <name>AMP</name>
        <dbReference type="ChEBI" id="CHEBI:456215"/>
    </ligand>
</feature>
<feature type="binding site" evidence="1">
    <location>
        <position position="171"/>
    </location>
    <ligand>
        <name>AMP</name>
        <dbReference type="ChEBI" id="CHEBI:456215"/>
    </ligand>
</feature>
<feature type="binding site" evidence="1">
    <location>
        <position position="199"/>
    </location>
    <ligand>
        <name>ATP</name>
        <dbReference type="ChEBI" id="CHEBI:30616"/>
    </ligand>
</feature>
<sequence>MNLILMGLPGAGKGTQAEQIVAKYNIPHISTGDMFRAAMKAETEMGLQAKSFIDKGALVPDEVTIGIVRERLSQEDCVRGFLLDGFPRTVAQASALEEIMKDLGKKIDYVLNINVDSGLLLKRLTGRRICKECGATYHLEFNAPAKADVCDKCGGELYQRSDDNEETVANRLDVNIKQTKPLLDFYEELGYLQSINGEQDINKVFADIDVLIGGLA</sequence>
<dbReference type="EC" id="2.7.4.3" evidence="1"/>
<dbReference type="EMBL" id="CP001215">
    <property type="protein sequence ID" value="ACP13236.1"/>
    <property type="molecule type" value="Genomic_DNA"/>
</dbReference>
<dbReference type="RefSeq" id="WP_001048992.1">
    <property type="nucleotide sequence ID" value="NC_012581.1"/>
</dbReference>
<dbReference type="SMR" id="C3LJA3"/>
<dbReference type="KEGG" id="bah:BAMEG_0147"/>
<dbReference type="HOGENOM" id="CLU_032354_1_2_9"/>
<dbReference type="UniPathway" id="UPA00588">
    <property type="reaction ID" value="UER00649"/>
</dbReference>
<dbReference type="GO" id="GO:0005737">
    <property type="term" value="C:cytoplasm"/>
    <property type="evidence" value="ECO:0007669"/>
    <property type="project" value="UniProtKB-SubCell"/>
</dbReference>
<dbReference type="GO" id="GO:0004017">
    <property type="term" value="F:adenylate kinase activity"/>
    <property type="evidence" value="ECO:0007669"/>
    <property type="project" value="UniProtKB-UniRule"/>
</dbReference>
<dbReference type="GO" id="GO:0005524">
    <property type="term" value="F:ATP binding"/>
    <property type="evidence" value="ECO:0007669"/>
    <property type="project" value="UniProtKB-UniRule"/>
</dbReference>
<dbReference type="GO" id="GO:0008270">
    <property type="term" value="F:zinc ion binding"/>
    <property type="evidence" value="ECO:0007669"/>
    <property type="project" value="UniProtKB-UniRule"/>
</dbReference>
<dbReference type="GO" id="GO:0044209">
    <property type="term" value="P:AMP salvage"/>
    <property type="evidence" value="ECO:0007669"/>
    <property type="project" value="UniProtKB-UniRule"/>
</dbReference>
<dbReference type="CDD" id="cd01428">
    <property type="entry name" value="ADK"/>
    <property type="match status" value="1"/>
</dbReference>
<dbReference type="FunFam" id="3.40.50.300:FF:000106">
    <property type="entry name" value="Adenylate kinase mitochondrial"/>
    <property type="match status" value="1"/>
</dbReference>
<dbReference type="Gene3D" id="3.40.50.300">
    <property type="entry name" value="P-loop containing nucleotide triphosphate hydrolases"/>
    <property type="match status" value="1"/>
</dbReference>
<dbReference type="HAMAP" id="MF_00235">
    <property type="entry name" value="Adenylate_kinase_Adk"/>
    <property type="match status" value="1"/>
</dbReference>
<dbReference type="InterPro" id="IPR006259">
    <property type="entry name" value="Adenyl_kin_sub"/>
</dbReference>
<dbReference type="InterPro" id="IPR000850">
    <property type="entry name" value="Adenylat/UMP-CMP_kin"/>
</dbReference>
<dbReference type="InterPro" id="IPR033690">
    <property type="entry name" value="Adenylat_kinase_CS"/>
</dbReference>
<dbReference type="InterPro" id="IPR007862">
    <property type="entry name" value="Adenylate_kinase_lid-dom"/>
</dbReference>
<dbReference type="InterPro" id="IPR027417">
    <property type="entry name" value="P-loop_NTPase"/>
</dbReference>
<dbReference type="NCBIfam" id="TIGR01351">
    <property type="entry name" value="adk"/>
    <property type="match status" value="1"/>
</dbReference>
<dbReference type="NCBIfam" id="NF001380">
    <property type="entry name" value="PRK00279.1-2"/>
    <property type="match status" value="1"/>
</dbReference>
<dbReference type="NCBIfam" id="NF001381">
    <property type="entry name" value="PRK00279.1-3"/>
    <property type="match status" value="1"/>
</dbReference>
<dbReference type="NCBIfam" id="NF011100">
    <property type="entry name" value="PRK14527.1"/>
    <property type="match status" value="1"/>
</dbReference>
<dbReference type="PANTHER" id="PTHR23359">
    <property type="entry name" value="NUCLEOTIDE KINASE"/>
    <property type="match status" value="1"/>
</dbReference>
<dbReference type="Pfam" id="PF00406">
    <property type="entry name" value="ADK"/>
    <property type="match status" value="1"/>
</dbReference>
<dbReference type="Pfam" id="PF05191">
    <property type="entry name" value="ADK_lid"/>
    <property type="match status" value="1"/>
</dbReference>
<dbReference type="PRINTS" id="PR00094">
    <property type="entry name" value="ADENYLTKNASE"/>
</dbReference>
<dbReference type="SUPFAM" id="SSF52540">
    <property type="entry name" value="P-loop containing nucleoside triphosphate hydrolases"/>
    <property type="match status" value="1"/>
</dbReference>
<dbReference type="PROSITE" id="PS00113">
    <property type="entry name" value="ADENYLATE_KINASE"/>
    <property type="match status" value="1"/>
</dbReference>
<proteinExistence type="inferred from homology"/>